<comment type="function">
    <text evidence="1">Component of the cytochrome b6-f complex, which mediates electron transfer between photosystem II (PSII) and photosystem I (PSI), cyclic electron flow around PSI, and state transitions.</text>
</comment>
<comment type="cofactor">
    <cofactor evidence="1">
        <name>heme</name>
        <dbReference type="ChEBI" id="CHEBI:30413"/>
    </cofactor>
    <text evidence="1">Binds 1 heme group covalently.</text>
</comment>
<comment type="subunit">
    <text evidence="1">The 4 large subunits of the cytochrome b6-f complex are cytochrome b6, subunit IV (17 kDa polypeptide, PetD), cytochrome f and the Rieske protein, while the 4 small subunits are PetG, PetL, PetM and PetN. The complex functions as a dimer.</text>
</comment>
<comment type="subcellular location">
    <subcellularLocation>
        <location evidence="1">Cellular thylakoid membrane</location>
        <topology evidence="1">Single-pass membrane protein</topology>
    </subcellularLocation>
</comment>
<comment type="similarity">
    <text evidence="1">Belongs to the cytochrome f family.</text>
</comment>
<dbReference type="EMBL" id="CP000435">
    <property type="protein sequence ID" value="ABI46689.1"/>
    <property type="molecule type" value="Genomic_DNA"/>
</dbReference>
<dbReference type="RefSeq" id="WP_011620061.1">
    <property type="nucleotide sequence ID" value="NC_008319.1"/>
</dbReference>
<dbReference type="SMR" id="Q0I873"/>
<dbReference type="STRING" id="64471.sync_2148"/>
<dbReference type="KEGG" id="syg:sync_2148"/>
<dbReference type="eggNOG" id="COG0739">
    <property type="taxonomic scope" value="Bacteria"/>
</dbReference>
<dbReference type="HOGENOM" id="CLU_033498_0_0_3"/>
<dbReference type="OrthoDB" id="581091at2"/>
<dbReference type="Proteomes" id="UP000001961">
    <property type="component" value="Chromosome"/>
</dbReference>
<dbReference type="GO" id="GO:0031676">
    <property type="term" value="C:plasma membrane-derived thylakoid membrane"/>
    <property type="evidence" value="ECO:0007669"/>
    <property type="project" value="UniProtKB-SubCell"/>
</dbReference>
<dbReference type="GO" id="GO:0009055">
    <property type="term" value="F:electron transfer activity"/>
    <property type="evidence" value="ECO:0007669"/>
    <property type="project" value="UniProtKB-UniRule"/>
</dbReference>
<dbReference type="GO" id="GO:0020037">
    <property type="term" value="F:heme binding"/>
    <property type="evidence" value="ECO:0007669"/>
    <property type="project" value="InterPro"/>
</dbReference>
<dbReference type="GO" id="GO:0005506">
    <property type="term" value="F:iron ion binding"/>
    <property type="evidence" value="ECO:0007669"/>
    <property type="project" value="InterPro"/>
</dbReference>
<dbReference type="GO" id="GO:0015979">
    <property type="term" value="P:photosynthesis"/>
    <property type="evidence" value="ECO:0007669"/>
    <property type="project" value="UniProtKB-UniRule"/>
</dbReference>
<dbReference type="FunFam" id="2.60.40.830:FF:000001">
    <property type="entry name" value="Cytochrome f"/>
    <property type="match status" value="1"/>
</dbReference>
<dbReference type="Gene3D" id="2.40.50.100">
    <property type="match status" value="1"/>
</dbReference>
<dbReference type="Gene3D" id="2.60.40.830">
    <property type="entry name" value="Cytochrome f large domain"/>
    <property type="match status" value="1"/>
</dbReference>
<dbReference type="Gene3D" id="1.20.5.700">
    <property type="entry name" value="Single helix bin"/>
    <property type="match status" value="1"/>
</dbReference>
<dbReference type="HAMAP" id="MF_00610">
    <property type="entry name" value="Cytb6_f_cytF"/>
    <property type="match status" value="1"/>
</dbReference>
<dbReference type="InterPro" id="IPR024058">
    <property type="entry name" value="Cyt-f_TM"/>
</dbReference>
<dbReference type="InterPro" id="IPR002325">
    <property type="entry name" value="Cyt_f"/>
</dbReference>
<dbReference type="InterPro" id="IPR024094">
    <property type="entry name" value="Cyt_f_lg_dom"/>
</dbReference>
<dbReference type="InterPro" id="IPR036826">
    <property type="entry name" value="Cyt_f_lg_dom_sf"/>
</dbReference>
<dbReference type="InterPro" id="IPR011054">
    <property type="entry name" value="Rudment_hybrid_motif"/>
</dbReference>
<dbReference type="NCBIfam" id="NF002736">
    <property type="entry name" value="PRK02693.1"/>
    <property type="match status" value="1"/>
</dbReference>
<dbReference type="PANTHER" id="PTHR33288">
    <property type="match status" value="1"/>
</dbReference>
<dbReference type="PANTHER" id="PTHR33288:SF10">
    <property type="entry name" value="CYTOCHROME F"/>
    <property type="match status" value="1"/>
</dbReference>
<dbReference type="Pfam" id="PF01333">
    <property type="entry name" value="Apocytochr_F_C"/>
    <property type="match status" value="1"/>
</dbReference>
<dbReference type="Pfam" id="PF16639">
    <property type="entry name" value="Apocytochr_F_N"/>
    <property type="match status" value="1"/>
</dbReference>
<dbReference type="PRINTS" id="PR00610">
    <property type="entry name" value="CYTOCHROMEF"/>
</dbReference>
<dbReference type="SUPFAM" id="SSF103431">
    <property type="entry name" value="Cytochrome f subunit of the cytochrome b6f complex, transmembrane anchor"/>
    <property type="match status" value="1"/>
</dbReference>
<dbReference type="SUPFAM" id="SSF49441">
    <property type="entry name" value="Cytochrome f, large domain"/>
    <property type="match status" value="1"/>
</dbReference>
<dbReference type="SUPFAM" id="SSF51246">
    <property type="entry name" value="Rudiment single hybrid motif"/>
    <property type="match status" value="1"/>
</dbReference>
<dbReference type="PROSITE" id="PS51010">
    <property type="entry name" value="CYTF"/>
    <property type="match status" value="1"/>
</dbReference>
<evidence type="ECO:0000255" key="1">
    <source>
        <dbReference type="HAMAP-Rule" id="MF_00610"/>
    </source>
</evidence>
<protein>
    <recommendedName>
        <fullName evidence="1">Cytochrome f</fullName>
    </recommendedName>
</protein>
<proteinExistence type="inferred from homology"/>
<name>CYF_SYNS3</name>
<sequence>MRRLLSSTFAALIVGLAVFSAPAASWAYPFWAQQNYDSPREATGKIVCANCHLAQKLTQAEVPQSVLPDSVFKAVVKIPYDTGVQELGADGSQVPLQVGAVVMLPDGFTLAPQDRWTDEIKEETEGVYFTEYSDDQPNVILVGPIPGDEHQEIVFPVLAPDPATDSSISFGKYSIHVGGNRGRGQVYPTGEKSNNTVYTAPASGSVSAIEPGDNGASVVTVKSADGAEITETVPVGPALLVSVGDVVEAGAPITDDPNVGGFGQLDTEVVLQNPVRIYGMLAFFAAVALAQIMLVLKKRQIEKVQAAEGV</sequence>
<organism>
    <name type="scientific">Synechococcus sp. (strain CC9311)</name>
    <dbReference type="NCBI Taxonomy" id="64471"/>
    <lineage>
        <taxon>Bacteria</taxon>
        <taxon>Bacillati</taxon>
        <taxon>Cyanobacteriota</taxon>
        <taxon>Cyanophyceae</taxon>
        <taxon>Synechococcales</taxon>
        <taxon>Synechococcaceae</taxon>
        <taxon>Synechococcus</taxon>
    </lineage>
</organism>
<feature type="signal peptide" evidence="1">
    <location>
        <begin position="1"/>
        <end position="23"/>
    </location>
</feature>
<feature type="chain" id="PRO_0000342037" description="Cytochrome f">
    <location>
        <begin position="24"/>
        <end position="310"/>
    </location>
</feature>
<feature type="transmembrane region" description="Helical" evidence="1">
    <location>
        <begin position="277"/>
        <end position="297"/>
    </location>
</feature>
<feature type="binding site" description="axial binding residue" evidence="1">
    <location>
        <position position="28"/>
    </location>
    <ligand>
        <name>heme</name>
        <dbReference type="ChEBI" id="CHEBI:30413"/>
    </ligand>
    <ligandPart>
        <name>Fe</name>
        <dbReference type="ChEBI" id="CHEBI:18248"/>
    </ligandPart>
</feature>
<feature type="binding site" description="covalent" evidence="1">
    <location>
        <position position="48"/>
    </location>
    <ligand>
        <name>heme</name>
        <dbReference type="ChEBI" id="CHEBI:30413"/>
    </ligand>
</feature>
<feature type="binding site" description="covalent" evidence="1">
    <location>
        <position position="51"/>
    </location>
    <ligand>
        <name>heme</name>
        <dbReference type="ChEBI" id="CHEBI:30413"/>
    </ligand>
</feature>
<feature type="binding site" description="axial binding residue" evidence="1">
    <location>
        <position position="52"/>
    </location>
    <ligand>
        <name>heme</name>
        <dbReference type="ChEBI" id="CHEBI:30413"/>
    </ligand>
    <ligandPart>
        <name>Fe</name>
        <dbReference type="ChEBI" id="CHEBI:18248"/>
    </ligandPart>
</feature>
<keyword id="KW-0249">Electron transport</keyword>
<keyword id="KW-0349">Heme</keyword>
<keyword id="KW-0408">Iron</keyword>
<keyword id="KW-0472">Membrane</keyword>
<keyword id="KW-0479">Metal-binding</keyword>
<keyword id="KW-0602">Photosynthesis</keyword>
<keyword id="KW-1185">Reference proteome</keyword>
<keyword id="KW-0732">Signal</keyword>
<keyword id="KW-0793">Thylakoid</keyword>
<keyword id="KW-0812">Transmembrane</keyword>
<keyword id="KW-1133">Transmembrane helix</keyword>
<keyword id="KW-0813">Transport</keyword>
<accession>Q0I873</accession>
<gene>
    <name evidence="1" type="primary">petA</name>
    <name type="ordered locus">sync_2148</name>
</gene>
<reference key="1">
    <citation type="journal article" date="2006" name="Proc. Natl. Acad. Sci. U.S.A.">
        <title>Genome sequence of Synechococcus CC9311: insights into adaptation to a coastal environment.</title>
        <authorList>
            <person name="Palenik B."/>
            <person name="Ren Q."/>
            <person name="Dupont C.L."/>
            <person name="Myers G.S."/>
            <person name="Heidelberg J.F."/>
            <person name="Badger J.H."/>
            <person name="Madupu R."/>
            <person name="Nelson W.C."/>
            <person name="Brinkac L.M."/>
            <person name="Dodson R.J."/>
            <person name="Durkin A.S."/>
            <person name="Daugherty S.C."/>
            <person name="Sullivan S.A."/>
            <person name="Khouri H."/>
            <person name="Mohamoud Y."/>
            <person name="Halpin R."/>
            <person name="Paulsen I.T."/>
        </authorList>
    </citation>
    <scope>NUCLEOTIDE SEQUENCE [LARGE SCALE GENOMIC DNA]</scope>
    <source>
        <strain>CC9311</strain>
    </source>
</reference>